<gene>
    <name type="primary">amiE</name>
    <name type="synonym">ami</name>
</gene>
<proteinExistence type="evidence at protein level"/>
<keyword id="KW-0002">3D-structure</keyword>
<keyword id="KW-0378">Hydrolase</keyword>
<protein>
    <recommendedName>
        <fullName>Aliphatic amidase</fullName>
        <ecNumber>3.5.1.4</ecNumber>
    </recommendedName>
    <alternativeName>
        <fullName>Acylamide amidohydrolase</fullName>
    </alternativeName>
</protein>
<name>AMIE_BACSP</name>
<accession>Q9L543</accession>
<sequence>MRHGDISSSHDTVGIAVVNYKMPRLHTKAEVIENAKKIADMVVGMKQGLPGMDLVVFPEYSTMGIMYDQDEMFATAASIPGEETAIFAEACKKADTWGVFSLTGEKHEDHPNKAPYNTLVLINNKGEIVQKYRKIIPWCPIEGWYPGDTTYVTEGPKGLKISLIVCDDGNYPEIWRDCAMKGAELIVRCQGYMYPAKEQQIMMAKAMAWANNTYVAVANATGFDGVYSYFGHSAIIGFDGRTLGECGTEENGIQYAEVSISQIRDFRKNAQSQNHLFKLLHRGYTGLINSGEGDRGVAECPFDFYRTWVLDAEKARENVEKITRSTVGTAECPIQGIPNEGKTKEIGV</sequence>
<organism>
    <name type="scientific">Bacillus sp</name>
    <dbReference type="NCBI Taxonomy" id="1409"/>
    <lineage>
        <taxon>Bacteria</taxon>
        <taxon>Bacillati</taxon>
        <taxon>Bacillota</taxon>
        <taxon>Bacilli</taxon>
        <taxon>Bacillales</taxon>
        <taxon>Bacillaceae</taxon>
        <taxon>Bacillus</taxon>
    </lineage>
</organism>
<evidence type="ECO:0000250" key="1"/>
<evidence type="ECO:0000255" key="2">
    <source>
        <dbReference type="PROSITE-ProRule" id="PRU00054"/>
    </source>
</evidence>
<evidence type="ECO:0000269" key="3">
    <source>
    </source>
</evidence>
<evidence type="ECO:0000305" key="4"/>
<evidence type="ECO:0007829" key="5">
    <source>
        <dbReference type="PDB" id="4KZF"/>
    </source>
</evidence>
<evidence type="ECO:0007829" key="6">
    <source>
        <dbReference type="PDB" id="4LF0"/>
    </source>
</evidence>
<feature type="chain" id="PRO_0000204055" description="Aliphatic amidase">
    <location>
        <begin position="1"/>
        <end position="348"/>
    </location>
</feature>
<feature type="domain" description="CN hydrolase" evidence="2">
    <location>
        <begin position="13"/>
        <end position="260"/>
    </location>
</feature>
<feature type="active site" description="Proton acceptor" evidence="1">
    <location>
        <position position="59"/>
    </location>
</feature>
<feature type="active site" description="Proton donor" evidence="1">
    <location>
        <position position="134"/>
    </location>
</feature>
<feature type="active site" description="Nucleophile" evidence="1">
    <location>
        <position position="166"/>
    </location>
</feature>
<feature type="strand" evidence="6">
    <location>
        <begin position="12"/>
        <end position="18"/>
    </location>
</feature>
<feature type="helix" evidence="6">
    <location>
        <begin position="28"/>
        <end position="48"/>
    </location>
</feature>
<feature type="strand" evidence="6">
    <location>
        <begin position="52"/>
        <end position="56"/>
    </location>
</feature>
<feature type="turn" evidence="6">
    <location>
        <begin position="59"/>
        <end position="63"/>
    </location>
</feature>
<feature type="helix" evidence="6">
    <location>
        <begin position="69"/>
        <end position="75"/>
    </location>
</feature>
<feature type="strand" evidence="6">
    <location>
        <begin position="79"/>
        <end position="81"/>
    </location>
</feature>
<feature type="helix" evidence="6">
    <location>
        <begin position="82"/>
        <end position="93"/>
    </location>
</feature>
<feature type="strand" evidence="6">
    <location>
        <begin position="97"/>
        <end position="105"/>
    </location>
</feature>
<feature type="turn" evidence="6">
    <location>
        <begin position="108"/>
        <end position="111"/>
    </location>
</feature>
<feature type="strand" evidence="6">
    <location>
        <begin position="116"/>
        <end position="122"/>
    </location>
</feature>
<feature type="strand" evidence="6">
    <location>
        <begin position="128"/>
        <end position="133"/>
    </location>
</feature>
<feature type="turn" evidence="6">
    <location>
        <begin position="139"/>
        <end position="141"/>
    </location>
</feature>
<feature type="helix" evidence="6">
    <location>
        <begin position="156"/>
        <end position="158"/>
    </location>
</feature>
<feature type="strand" evidence="6">
    <location>
        <begin position="160"/>
        <end position="165"/>
    </location>
</feature>
<feature type="helix" evidence="6">
    <location>
        <begin position="166"/>
        <end position="170"/>
    </location>
</feature>
<feature type="helix" evidence="6">
    <location>
        <begin position="172"/>
        <end position="180"/>
    </location>
</feature>
<feature type="strand" evidence="6">
    <location>
        <begin position="184"/>
        <end position="190"/>
    </location>
</feature>
<feature type="strand" evidence="5">
    <location>
        <begin position="193"/>
        <end position="195"/>
    </location>
</feature>
<feature type="helix" evidence="6">
    <location>
        <begin position="197"/>
        <end position="211"/>
    </location>
</feature>
<feature type="strand" evidence="6">
    <location>
        <begin position="214"/>
        <end position="219"/>
    </location>
</feature>
<feature type="strand" evidence="6">
    <location>
        <begin position="221"/>
        <end position="223"/>
    </location>
</feature>
<feature type="strand" evidence="6">
    <location>
        <begin position="228"/>
        <end position="230"/>
    </location>
</feature>
<feature type="strand" evidence="6">
    <location>
        <begin position="234"/>
        <end position="236"/>
    </location>
</feature>
<feature type="strand" evidence="6">
    <location>
        <begin position="242"/>
        <end position="245"/>
    </location>
</feature>
<feature type="strand" evidence="6">
    <location>
        <begin position="253"/>
        <end position="259"/>
    </location>
</feature>
<feature type="helix" evidence="6">
    <location>
        <begin position="260"/>
        <end position="269"/>
    </location>
</feature>
<feature type="helix" evidence="6">
    <location>
        <begin position="275"/>
        <end position="279"/>
    </location>
</feature>
<feature type="helix" evidence="6">
    <location>
        <begin position="284"/>
        <end position="289"/>
    </location>
</feature>
<feature type="helix" evidence="6">
    <location>
        <begin position="303"/>
        <end position="310"/>
    </location>
</feature>
<feature type="helix" evidence="6">
    <location>
        <begin position="312"/>
        <end position="322"/>
    </location>
</feature>
<feature type="strand" evidence="6">
    <location>
        <begin position="325"/>
        <end position="328"/>
    </location>
</feature>
<comment type="function">
    <text evidence="3">Catalyzes the hydrolysis of short-chain aliphatic amides to their corresponding organic acids with release of ammonia.</text>
</comment>
<comment type="function">
    <text evidence="1">Also exhibits in vitro acyl transferase activity, transferring the acyl moiety of short-chain amides to hydroxylamine to form hydroxamates.</text>
</comment>
<comment type="catalytic activity">
    <reaction>
        <text>a monocarboxylic acid amide + H2O = a monocarboxylate + NH4(+)</text>
        <dbReference type="Rhea" id="RHEA:12020"/>
        <dbReference type="ChEBI" id="CHEBI:15377"/>
        <dbReference type="ChEBI" id="CHEBI:28938"/>
        <dbReference type="ChEBI" id="CHEBI:35757"/>
        <dbReference type="ChEBI" id="CHEBI:83628"/>
        <dbReference type="EC" id="3.5.1.4"/>
    </reaction>
</comment>
<comment type="biophysicochemical properties">
    <temperatureDependence>
        <text>Thermostable up to at least 50 degrees Celsius.</text>
    </temperatureDependence>
</comment>
<comment type="similarity">
    <text evidence="4">Belongs to the carbon-nitrogen hydrolase superfamily. Aliphatic amidase family.</text>
</comment>
<reference key="1">
    <citation type="journal article" date="2000" name="Enzyme Microb. Technol.">
        <title>Cloning and expression of the nitrile hydratase and amidase genes from Bacillus sp. BR449 into Escherichia coli.</title>
        <authorList>
            <person name="Kim S.-H."/>
            <person name="Oriel P.J."/>
        </authorList>
    </citation>
    <scope>NUCLEOTIDE SEQUENCE [GENOMIC DNA]</scope>
    <scope>FUNCTION</scope>
    <source>
        <strain>BR499</strain>
    </source>
</reference>
<reference key="2">
    <citation type="submission" date="2002-11" db="EMBL/GenBank/DDBJ databases">
        <title>Cloning, expression and characterization of the nitrile hydratase and amidase of a moderately thermophilic Bacillus sp.</title>
        <authorList>
            <person name="Cameron R.A."/>
            <person name="Cowan D.A."/>
        </authorList>
    </citation>
    <scope>NUCLEOTIDE SEQUENCE [GENOMIC DNA]</scope>
    <source>
        <strain>RAPc8</strain>
    </source>
</reference>
<dbReference type="EC" id="3.5.1.4"/>
<dbReference type="EMBL" id="AF257487">
    <property type="protein sequence ID" value="AAF69000.1"/>
    <property type="molecule type" value="Genomic_DNA"/>
</dbReference>
<dbReference type="EMBL" id="AY184492">
    <property type="protein sequence ID" value="AAO23013.1"/>
    <property type="molecule type" value="Genomic_DNA"/>
</dbReference>
<dbReference type="PDB" id="2PLQ">
    <property type="method" value="X-ray"/>
    <property type="resolution" value="1.90 A"/>
    <property type="chains" value="A=1-348"/>
</dbReference>
<dbReference type="PDB" id="4GYL">
    <property type="method" value="X-ray"/>
    <property type="resolution" value="1.90 A"/>
    <property type="chains" value="A=1-348"/>
</dbReference>
<dbReference type="PDB" id="4GYN">
    <property type="method" value="X-ray"/>
    <property type="resolution" value="1.90 A"/>
    <property type="chains" value="A=1-348"/>
</dbReference>
<dbReference type="PDB" id="4KZF">
    <property type="method" value="X-ray"/>
    <property type="resolution" value="1.85 A"/>
    <property type="chains" value="A=1-348"/>
</dbReference>
<dbReference type="PDB" id="4LF0">
    <property type="method" value="X-ray"/>
    <property type="resolution" value="1.10 A"/>
    <property type="chains" value="A=1-348"/>
</dbReference>
<dbReference type="PDBsum" id="2PLQ"/>
<dbReference type="PDBsum" id="4GYL"/>
<dbReference type="PDBsum" id="4GYN"/>
<dbReference type="PDBsum" id="4KZF"/>
<dbReference type="PDBsum" id="4LF0"/>
<dbReference type="SMR" id="Q9L543"/>
<dbReference type="EvolutionaryTrace" id="Q9L543"/>
<dbReference type="GO" id="GO:0004040">
    <property type="term" value="F:amidase activity"/>
    <property type="evidence" value="ECO:0007669"/>
    <property type="project" value="UniProtKB-UniRule"/>
</dbReference>
<dbReference type="CDD" id="cd07565">
    <property type="entry name" value="aliphatic_amidase"/>
    <property type="match status" value="1"/>
</dbReference>
<dbReference type="Gene3D" id="3.60.110.10">
    <property type="entry name" value="Carbon-nitrogen hydrolase"/>
    <property type="match status" value="1"/>
</dbReference>
<dbReference type="HAMAP" id="MF_01242">
    <property type="entry name" value="Aliphatic_amidase"/>
    <property type="match status" value="1"/>
</dbReference>
<dbReference type="InterPro" id="IPR050345">
    <property type="entry name" value="Aliph_Amidase/BUP"/>
</dbReference>
<dbReference type="InterPro" id="IPR023719">
    <property type="entry name" value="Aliphatic_amidase"/>
</dbReference>
<dbReference type="InterPro" id="IPR003010">
    <property type="entry name" value="C-N_Hydrolase"/>
</dbReference>
<dbReference type="InterPro" id="IPR036526">
    <property type="entry name" value="C-N_Hydrolase_sf"/>
</dbReference>
<dbReference type="NCBIfam" id="NF009802">
    <property type="entry name" value="PRK13286.1"/>
    <property type="match status" value="1"/>
</dbReference>
<dbReference type="PANTHER" id="PTHR43674:SF14">
    <property type="entry name" value="ALIPHATIC AMIDASE"/>
    <property type="match status" value="1"/>
</dbReference>
<dbReference type="PANTHER" id="PTHR43674">
    <property type="entry name" value="NITRILASE C965.09-RELATED"/>
    <property type="match status" value="1"/>
</dbReference>
<dbReference type="Pfam" id="PF00795">
    <property type="entry name" value="CN_hydrolase"/>
    <property type="match status" value="1"/>
</dbReference>
<dbReference type="SUPFAM" id="SSF56317">
    <property type="entry name" value="Carbon-nitrogen hydrolase"/>
    <property type="match status" value="1"/>
</dbReference>
<dbReference type="PROSITE" id="PS50263">
    <property type="entry name" value="CN_HYDROLASE"/>
    <property type="match status" value="1"/>
</dbReference>